<comment type="similarity">
    <text evidence="1">Belongs to the UPF0381 family.</text>
</comment>
<feature type="chain" id="PRO_0000077919" description="UPF0381 protein HI_0400">
    <location>
        <begin position="1"/>
        <end position="95"/>
    </location>
</feature>
<dbReference type="EMBL" id="L42023">
    <property type="protein sequence ID" value="AAC22059.1"/>
    <property type="molecule type" value="Genomic_DNA"/>
</dbReference>
<dbReference type="PIR" id="C64151">
    <property type="entry name" value="C64151"/>
</dbReference>
<dbReference type="RefSeq" id="NP_438562.1">
    <property type="nucleotide sequence ID" value="NC_000907.1"/>
</dbReference>
<dbReference type="SMR" id="P44686"/>
<dbReference type="STRING" id="71421.HI_0400"/>
<dbReference type="EnsemblBacteria" id="AAC22059">
    <property type="protein sequence ID" value="AAC22059"/>
    <property type="gene ID" value="HI_0400"/>
</dbReference>
<dbReference type="KEGG" id="hin:HI_0400"/>
<dbReference type="PATRIC" id="fig|71421.8.peg.419"/>
<dbReference type="eggNOG" id="COG3691">
    <property type="taxonomic scope" value="Bacteria"/>
</dbReference>
<dbReference type="HOGENOM" id="CLU_162758_0_0_6"/>
<dbReference type="OrthoDB" id="6198608at2"/>
<dbReference type="PhylomeDB" id="P44686"/>
<dbReference type="BioCyc" id="HINF71421:G1GJ1-415-MONOMER"/>
<dbReference type="Proteomes" id="UP000000579">
    <property type="component" value="Chromosome"/>
</dbReference>
<dbReference type="GO" id="GO:0005829">
    <property type="term" value="C:cytosol"/>
    <property type="evidence" value="ECO:0000318"/>
    <property type="project" value="GO_Central"/>
</dbReference>
<dbReference type="FunFam" id="3.30.70.860:FF:000008">
    <property type="entry name" value="UPF0381 protein HI_0400"/>
    <property type="match status" value="1"/>
</dbReference>
<dbReference type="Gene3D" id="3.30.70.860">
    <property type="match status" value="1"/>
</dbReference>
<dbReference type="InterPro" id="IPR005272">
    <property type="entry name" value="DUF406"/>
</dbReference>
<dbReference type="InterPro" id="IPR035571">
    <property type="entry name" value="UPF0234-like_C"/>
</dbReference>
<dbReference type="NCBIfam" id="TIGR00743">
    <property type="entry name" value="DUF406 family protein"/>
    <property type="match status" value="1"/>
</dbReference>
<dbReference type="PANTHER" id="PTHR38769">
    <property type="entry name" value="UPF0381 PROTEIN YFCZ-RELATED"/>
    <property type="match status" value="1"/>
</dbReference>
<dbReference type="PANTHER" id="PTHR38769:SF1">
    <property type="entry name" value="UPF0381 PROTEIN YFCZ-RELATED"/>
    <property type="match status" value="1"/>
</dbReference>
<dbReference type="Pfam" id="PF04175">
    <property type="entry name" value="DUF406"/>
    <property type="match status" value="1"/>
</dbReference>
<proteinExistence type="inferred from homology"/>
<reference key="1">
    <citation type="journal article" date="1995" name="Science">
        <title>Whole-genome random sequencing and assembly of Haemophilus influenzae Rd.</title>
        <authorList>
            <person name="Fleischmann R.D."/>
            <person name="Adams M.D."/>
            <person name="White O."/>
            <person name="Clayton R.A."/>
            <person name="Kirkness E.F."/>
            <person name="Kerlavage A.R."/>
            <person name="Bult C.J."/>
            <person name="Tomb J.-F."/>
            <person name="Dougherty B.A."/>
            <person name="Merrick J.M."/>
            <person name="McKenney K."/>
            <person name="Sutton G.G."/>
            <person name="FitzHugh W."/>
            <person name="Fields C.A."/>
            <person name="Gocayne J.D."/>
            <person name="Scott J.D."/>
            <person name="Shirley R."/>
            <person name="Liu L.-I."/>
            <person name="Glodek A."/>
            <person name="Kelley J.M."/>
            <person name="Weidman J.F."/>
            <person name="Phillips C.A."/>
            <person name="Spriggs T."/>
            <person name="Hedblom E."/>
            <person name="Cotton M.D."/>
            <person name="Utterback T.R."/>
            <person name="Hanna M.C."/>
            <person name="Nguyen D.T."/>
            <person name="Saudek D.M."/>
            <person name="Brandon R.C."/>
            <person name="Fine L.D."/>
            <person name="Fritchman J.L."/>
            <person name="Fuhrmann J.L."/>
            <person name="Geoghagen N.S.M."/>
            <person name="Gnehm C.L."/>
            <person name="McDonald L.A."/>
            <person name="Small K.V."/>
            <person name="Fraser C.M."/>
            <person name="Smith H.O."/>
            <person name="Venter J.C."/>
        </authorList>
    </citation>
    <scope>NUCLEOTIDE SEQUENCE [LARGE SCALE GENOMIC DNA]</scope>
    <source>
        <strain>ATCC 51907 / DSM 11121 / KW20 / Rd</strain>
    </source>
</reference>
<name>Y400_HAEIN</name>
<sequence length="95" mass="10343">MTVKCKAEESLTCSCVDVGTIIDGSDCSVEVHQFYSTEADANAVLERLTKKARNTESDPCEIKSEIVAVENGVQLNASFTFSCQAEAMIFELANR</sequence>
<accession>P44686</accession>
<gene>
    <name type="ordered locus">HI_0400</name>
</gene>
<keyword id="KW-1185">Reference proteome</keyword>
<protein>
    <recommendedName>
        <fullName>UPF0381 protein HI_0400</fullName>
    </recommendedName>
</protein>
<organism>
    <name type="scientific">Haemophilus influenzae (strain ATCC 51907 / DSM 11121 / KW20 / Rd)</name>
    <dbReference type="NCBI Taxonomy" id="71421"/>
    <lineage>
        <taxon>Bacteria</taxon>
        <taxon>Pseudomonadati</taxon>
        <taxon>Pseudomonadota</taxon>
        <taxon>Gammaproteobacteria</taxon>
        <taxon>Pasteurellales</taxon>
        <taxon>Pasteurellaceae</taxon>
        <taxon>Haemophilus</taxon>
    </lineage>
</organism>
<evidence type="ECO:0000305" key="1"/>